<comment type="function">
    <text evidence="1 4 5 6">Component of the velvet transcription factor complex that controls sexual/asexual developmental ratio in response to light, promoting sexual development in the darkness while stimulating asexual sporulation under illumination (PubMed:23118899). The velvet complex hat acts as a global regulator for secondary metabolite gene expression (By similarity). Controls the expression of the oxalic acid and melanin gene clusters (PubMed:23118899, PubMed:23147398). Also controls the expression of proteases and carbohydrate-active enzymes (PubMed:25625818). Involved in the resistance to oxidative stress (PubMed:23147398). Required for full virulence (PubMed:23118899, PubMed:23147398).</text>
</comment>
<comment type="subunit">
    <text evidence="6">Component of the heterotrimeric velvet complex composed of LAE1, VEL1 and VEL2; VEL1 acting as a bridging protein between LAE1 and VEL2 (PubMed:25625818).</text>
</comment>
<comment type="subcellular location">
    <subcellularLocation>
        <location evidence="4">Nucleus</location>
    </subcellularLocation>
    <subcellularLocation>
        <location evidence="1">Cytoplasm</location>
    </subcellularLocation>
    <text evidence="1">Enriched in the nucleus in the dark (By similarity).</text>
</comment>
<comment type="domain">
    <text evidence="1">The C-terminal PEST domain is a region rich in proline, glutamic acid, serine and threonine residues that is required for the light-dependent regulation of development and secondary metabolism (By similarity).</text>
</comment>
<comment type="disruption phenotype">
    <text evidence="4 5">Leads to light-independent conidiation, loss of sclerotial development and oxalic acid production, and reduced virulence on several host plants (PubMed:23118899, PubMed:25625818). Increases conidiation and melanin biosynthesis (PubMed:23147398).</text>
</comment>
<comment type="similarity">
    <text evidence="8">Belongs to the velvet family. VeA subfamily.</text>
</comment>
<proteinExistence type="evidence at protein level"/>
<organism>
    <name type="scientific">Botryotinia fuckeliana (strain B05.10)</name>
    <name type="common">Noble rot fungus</name>
    <name type="synonym">Botrytis cinerea</name>
    <dbReference type="NCBI Taxonomy" id="332648"/>
    <lineage>
        <taxon>Eukaryota</taxon>
        <taxon>Fungi</taxon>
        <taxon>Dikarya</taxon>
        <taxon>Ascomycota</taxon>
        <taxon>Pezizomycotina</taxon>
        <taxon>Leotiomycetes</taxon>
        <taxon>Helotiales</taxon>
        <taxon>Sclerotiniaceae</taxon>
        <taxon>Botrytis</taxon>
    </lineage>
</organism>
<name>VEA_BOTFB</name>
<feature type="chain" id="PRO_0000435775" description="Developmental and secondary metabolism regulator VEL1">
    <location>
        <begin position="1"/>
        <end position="575"/>
    </location>
</feature>
<feature type="domain" description="Velvet" evidence="2">
    <location>
        <begin position="21"/>
        <end position="225"/>
    </location>
</feature>
<feature type="region of interest" description="Disordered" evidence="3">
    <location>
        <begin position="36"/>
        <end position="56"/>
    </location>
</feature>
<feature type="region of interest" description="Disordered" evidence="3">
    <location>
        <begin position="227"/>
        <end position="402"/>
    </location>
</feature>
<feature type="region of interest" description="PEST" evidence="1">
    <location>
        <begin position="465"/>
        <end position="509"/>
    </location>
</feature>
<feature type="region of interest" description="Disordered" evidence="3">
    <location>
        <begin position="513"/>
        <end position="549"/>
    </location>
</feature>
<feature type="short sequence motif" description="Nuclear localization signal" evidence="1">
    <location>
        <begin position="35"/>
        <end position="40"/>
    </location>
</feature>
<feature type="compositionally biased region" description="Basic and acidic residues" evidence="3">
    <location>
        <begin position="274"/>
        <end position="284"/>
    </location>
</feature>
<feature type="compositionally biased region" description="Polar residues" evidence="3">
    <location>
        <begin position="294"/>
        <end position="308"/>
    </location>
</feature>
<feature type="compositionally biased region" description="Pro residues" evidence="3">
    <location>
        <begin position="334"/>
        <end position="346"/>
    </location>
</feature>
<feature type="compositionally biased region" description="Polar residues" evidence="3">
    <location>
        <begin position="355"/>
        <end position="365"/>
    </location>
</feature>
<feature type="compositionally biased region" description="Polar residues" evidence="3">
    <location>
        <begin position="385"/>
        <end position="402"/>
    </location>
</feature>
<feature type="compositionally biased region" description="Polar residues" evidence="3">
    <location>
        <begin position="516"/>
        <end position="538"/>
    </location>
</feature>
<evidence type="ECO:0000250" key="1">
    <source>
        <dbReference type="UniProtKB" id="C8VTV4"/>
    </source>
</evidence>
<evidence type="ECO:0000255" key="2">
    <source>
        <dbReference type="PROSITE-ProRule" id="PRU01165"/>
    </source>
</evidence>
<evidence type="ECO:0000256" key="3">
    <source>
        <dbReference type="SAM" id="MobiDB-lite"/>
    </source>
</evidence>
<evidence type="ECO:0000269" key="4">
    <source>
    </source>
</evidence>
<evidence type="ECO:0000269" key="5">
    <source>
    </source>
</evidence>
<evidence type="ECO:0000269" key="6">
    <source>
    </source>
</evidence>
<evidence type="ECO:0000303" key="7">
    <source>
    </source>
</evidence>
<evidence type="ECO:0000305" key="8"/>
<reference key="1">
    <citation type="journal article" date="2012" name="PLoS ONE">
        <title>Natural variation in the VELVET gene bcvel1 affects virulence and light-dependent differentiation in Botrytis cinerea.</title>
        <authorList>
            <person name="Schumacher J."/>
            <person name="Pradier J.M."/>
            <person name="Simon A."/>
            <person name="Traeger S."/>
            <person name="Moraga J."/>
            <person name="Collado I.G."/>
            <person name="Viaud M."/>
            <person name="Tudzynski B."/>
        </authorList>
    </citation>
    <scope>NUCLEOTIDE SEQUENCE [GENOMIC DNA]</scope>
    <scope>FUNCTION</scope>
    <scope>DISRUPTION PHENOTYPE</scope>
    <source>
        <strain>B05.10</strain>
    </source>
</reference>
<reference key="2">
    <citation type="journal article" date="2013" name="Fungal Genet. Biol.">
        <title>Involvement of BcVeA and BcVelB in regulating conidiation, pigmentation and virulence in Botrytis cinerea.</title>
        <authorList>
            <person name="Yang Q."/>
            <person name="Chen Y."/>
            <person name="Ma Z."/>
        </authorList>
    </citation>
    <scope>FUNCTION</scope>
    <scope>DISRUPTION PHENOTYPE</scope>
</reference>
<reference key="3">
    <citation type="journal article" date="2015" name="Mol. Plant Microbe Interact.">
        <title>The VELVET complex in the gray mold fungus Botrytis cinerea: impact of BcLAE1 on differentiation, secondary metabolism, and virulence.</title>
        <authorList>
            <person name="Schumacher J."/>
            <person name="Simon A."/>
            <person name="Cohrs K.C."/>
            <person name="Traeger S."/>
            <person name="Porquier A."/>
            <person name="Dalmais B."/>
            <person name="Viaud M."/>
            <person name="Tudzynski B."/>
        </authorList>
    </citation>
    <scope>IDENTIFICATION IN THE VELVET COMPLEX</scope>
    <scope>FUNCTION</scope>
    <scope>DISRUPTION PHENOTYPE</scope>
</reference>
<sequence length="575" mass="63594">MAASIGPKSIPETITRQTKGGRKLKYTLTVIQQPERARACGSGAKSSADRRPVDPPPVVQLRIYDETDPRQEKEITFHYNANFFLFATLEVARNIAQGRVQTSAPQAPVLTGMPVSGMAYLDRPNEAGYFIFPDLSVRHEGQYKLSFNLYEETKEEKDTDIEPSNDSSMRQMSSAAAAAESSFDWRMELKSDQFTVYSAKKFPGLSESTDLSRTVAEQGCRVRIRRDVRMRRRDTKPGGDFGEKEDEYQQGRATSPPFDYNIQAARQRALSASVHEDPQQRRGSGEISPYHSPVVNTPFRTPSISPSTPNAPLPPGNQLGWIPNGPGYAAAPSIQPPHPPPPPPSSYPQSMPATHHNQGPSTQFRQQPPQGPPPAPIGYDERRSSYSQFRPPTNPSQQQSYESDYRRMSFGYQIPASSQGPQPIAPAVQNPAYNQQSMEPTYSRNPPAYSTSFQDSVALAPLRAAEQPLAMSPLASVTSISRGTQNSAPMPSHNYNKLERSGSYSQYAPIEAEAPKSTNKRSFNDVFSTPTESLSNGRRPSAIGIDIEENTRKQEQMIYRRANGNIQNKPAPGLN</sequence>
<protein>
    <recommendedName>
        <fullName evidence="8">Developmental and secondary metabolism regulator VEL1</fullName>
    </recommendedName>
    <alternativeName>
        <fullName evidence="8">Velvet complex subunit 1</fullName>
    </alternativeName>
</protein>
<dbReference type="EMBL" id="HE977589">
    <property type="protein sequence ID" value="CCK35904.1"/>
    <property type="molecule type" value="Genomic_DNA"/>
</dbReference>
<dbReference type="SMR" id="L0PQS5"/>
<dbReference type="EnsemblFungi" id="Bcin15g03390.1">
    <property type="protein sequence ID" value="Bcin15p03390.1"/>
    <property type="gene ID" value="Bcin15g03390"/>
</dbReference>
<dbReference type="VEuPathDB" id="FungiDB:Bcin15g03390"/>
<dbReference type="OrthoDB" id="5384689at2759"/>
<dbReference type="GO" id="GO:0005737">
    <property type="term" value="C:cytoplasm"/>
    <property type="evidence" value="ECO:0007669"/>
    <property type="project" value="UniProtKB-SubCell"/>
</dbReference>
<dbReference type="GO" id="GO:0005634">
    <property type="term" value="C:nucleus"/>
    <property type="evidence" value="ECO:0007669"/>
    <property type="project" value="UniProtKB-SubCell"/>
</dbReference>
<dbReference type="GO" id="GO:0030435">
    <property type="term" value="P:sporulation resulting in formation of a cellular spore"/>
    <property type="evidence" value="ECO:0007669"/>
    <property type="project" value="UniProtKB-KW"/>
</dbReference>
<dbReference type="FunFam" id="2.60.40.3960:FF:000001">
    <property type="entry name" value="Sexual development activator VeA"/>
    <property type="match status" value="1"/>
</dbReference>
<dbReference type="Gene3D" id="2.60.40.3960">
    <property type="entry name" value="Velvet domain"/>
    <property type="match status" value="1"/>
</dbReference>
<dbReference type="InterPro" id="IPR021740">
    <property type="entry name" value="Velvet"/>
</dbReference>
<dbReference type="InterPro" id="IPR037525">
    <property type="entry name" value="Velvet_dom"/>
</dbReference>
<dbReference type="InterPro" id="IPR038491">
    <property type="entry name" value="Velvet_dom_sf"/>
</dbReference>
<dbReference type="PANTHER" id="PTHR33572:SF14">
    <property type="entry name" value="DEVELOPMENTAL AND SECONDARY METABOLISM REGULATOR VEA"/>
    <property type="match status" value="1"/>
</dbReference>
<dbReference type="PANTHER" id="PTHR33572">
    <property type="entry name" value="SPORE DEVELOPMENT REGULATOR VOSA"/>
    <property type="match status" value="1"/>
</dbReference>
<dbReference type="Pfam" id="PF11754">
    <property type="entry name" value="Velvet"/>
    <property type="match status" value="2"/>
</dbReference>
<dbReference type="PROSITE" id="PS51821">
    <property type="entry name" value="VELVET"/>
    <property type="match status" value="1"/>
</dbReference>
<gene>
    <name evidence="7" type="primary">VEL1</name>
</gene>
<keyword id="KW-0963">Cytoplasm</keyword>
<keyword id="KW-0539">Nucleus</keyword>
<keyword id="KW-0749">Sporulation</keyword>
<keyword id="KW-0804">Transcription</keyword>
<keyword id="KW-0805">Transcription regulation</keyword>
<accession>L0PQS5</accession>